<sequence>MFLISGISSILAIGLLSPVQSIVCLIVLFVSAAISLYSNGFVLMGILYVLIYVGAIAILFLFILSLLNIEYNYKGTIHPLIFTILIICLIPLDLSYETYGIVENVNIAYPFNSLLDWDLELTTVGSLLYTEYAIPMILIGLILILSVIGAIAITK</sequence>
<name>NU6M_CANPA</name>
<reference key="1">
    <citation type="journal article" date="1994" name="J. Bacteriol.">
        <title>NADH dehydrogenase subunit genes in the mitochondrial DNA of yeasts.</title>
        <authorList>
            <person name="Nosek J."/>
            <person name="Fukuhara H."/>
        </authorList>
    </citation>
    <scope>NUCLEOTIDE SEQUENCE [GENOMIC DNA]</scope>
    <source>
        <strain>SR23 / CBS 7157</strain>
    </source>
</reference>
<reference key="2">
    <citation type="journal article" date="2004" name="Mol. Genet. Genomics">
        <title>Complete DNA sequence of the linear mitochondrial genome of the pathogenic yeast Candida parapsilosis.</title>
        <authorList>
            <person name="Nosek J."/>
            <person name="Novotna M."/>
            <person name="Hlavatovicova Z."/>
            <person name="Ussery D.W."/>
            <person name="Fajkus J."/>
            <person name="Tomaska L."/>
        </authorList>
    </citation>
    <scope>NUCLEOTIDE SEQUENCE [LARGE SCALE GENOMIC DNA]</scope>
    <source>
        <strain>SR23 / CBS 7157</strain>
    </source>
</reference>
<proteinExistence type="inferred from homology"/>
<protein>
    <recommendedName>
        <fullName>NADH-ubiquinone oxidoreductase chain 6</fullName>
        <ecNumber>7.1.1.2</ecNumber>
    </recommendedName>
    <alternativeName>
        <fullName>NADH dehydrogenase subunit 6</fullName>
    </alternativeName>
</protein>
<geneLocation type="mitochondrion"/>
<keyword id="KW-0249">Electron transport</keyword>
<keyword id="KW-0472">Membrane</keyword>
<keyword id="KW-0496">Mitochondrion</keyword>
<keyword id="KW-0520">NAD</keyword>
<keyword id="KW-0679">Respiratory chain</keyword>
<keyword id="KW-1278">Translocase</keyword>
<keyword id="KW-0812">Transmembrane</keyword>
<keyword id="KW-1133">Transmembrane helix</keyword>
<keyword id="KW-0813">Transport</keyword>
<keyword id="KW-0830">Ubiquinone</keyword>
<feature type="chain" id="PRO_0000118260" description="NADH-ubiquinone oxidoreductase chain 6">
    <location>
        <begin position="1"/>
        <end position="155"/>
    </location>
</feature>
<feature type="transmembrane region" description="Helical" evidence="2">
    <location>
        <begin position="10"/>
        <end position="30"/>
    </location>
</feature>
<feature type="transmembrane region" description="Helical" evidence="2">
    <location>
        <begin position="43"/>
        <end position="63"/>
    </location>
</feature>
<feature type="transmembrane region" description="Helical" evidence="2">
    <location>
        <begin position="75"/>
        <end position="95"/>
    </location>
</feature>
<feature type="transmembrane region" description="Helical" evidence="2">
    <location>
        <begin position="133"/>
        <end position="153"/>
    </location>
</feature>
<comment type="function">
    <text evidence="1">Core subunit of the mitochondrial membrane respiratory chain NADH dehydrogenase (Complex I) that is believed to belong to the minimal assembly required for catalysis. Complex I functions in the transfer of electrons from NADH to the respiratory chain. The immediate electron acceptor for the enzyme is believed to be ubiquinone (By similarity).</text>
</comment>
<comment type="catalytic activity">
    <reaction>
        <text>a ubiquinone + NADH + 5 H(+)(in) = a ubiquinol + NAD(+) + 4 H(+)(out)</text>
        <dbReference type="Rhea" id="RHEA:29091"/>
        <dbReference type="Rhea" id="RHEA-COMP:9565"/>
        <dbReference type="Rhea" id="RHEA-COMP:9566"/>
        <dbReference type="ChEBI" id="CHEBI:15378"/>
        <dbReference type="ChEBI" id="CHEBI:16389"/>
        <dbReference type="ChEBI" id="CHEBI:17976"/>
        <dbReference type="ChEBI" id="CHEBI:57540"/>
        <dbReference type="ChEBI" id="CHEBI:57945"/>
        <dbReference type="EC" id="7.1.1.2"/>
    </reaction>
</comment>
<comment type="subcellular location">
    <subcellularLocation>
        <location evidence="3">Mitochondrion membrane</location>
        <topology evidence="3">Multi-pass membrane protein</topology>
    </subcellularLocation>
</comment>
<comment type="similarity">
    <text evidence="3">Belongs to the complex I subunit 6 family.</text>
</comment>
<accession>P48923</accession>
<evidence type="ECO:0000250" key="1"/>
<evidence type="ECO:0000255" key="2"/>
<evidence type="ECO:0000305" key="3"/>
<dbReference type="EC" id="7.1.1.2"/>
<dbReference type="EMBL" id="X74411">
    <property type="protein sequence ID" value="CAE54605.1"/>
    <property type="molecule type" value="Genomic_DNA"/>
</dbReference>
<dbReference type="RefSeq" id="NP_943643.1">
    <property type="nucleotide sequence ID" value="NC_005253.2"/>
</dbReference>
<dbReference type="SMR" id="P48923"/>
<dbReference type="CGD" id="CAL0000144967">
    <property type="gene designation" value="CapafMp11"/>
</dbReference>
<dbReference type="VEuPathDB" id="FungiDB:CapafMp11"/>
<dbReference type="GO" id="GO:0031966">
    <property type="term" value="C:mitochondrial membrane"/>
    <property type="evidence" value="ECO:0007669"/>
    <property type="project" value="UniProtKB-SubCell"/>
</dbReference>
<dbReference type="GO" id="GO:0008137">
    <property type="term" value="F:NADH dehydrogenase (ubiquinone) activity"/>
    <property type="evidence" value="ECO:0007669"/>
    <property type="project" value="UniProtKB-EC"/>
</dbReference>
<dbReference type="Gene3D" id="1.20.120.1200">
    <property type="entry name" value="NADH-ubiquinone/plastoquinone oxidoreductase chain 6, subunit NuoJ"/>
    <property type="match status" value="1"/>
</dbReference>
<dbReference type="InterPro" id="IPR001457">
    <property type="entry name" value="NADH_UbQ/plastoQ_OxRdtase_su6"/>
</dbReference>
<dbReference type="InterPro" id="IPR042106">
    <property type="entry name" value="Nuo/plastoQ_OxRdtase_6_NuoJ"/>
</dbReference>
<dbReference type="PANTHER" id="PTHR33269">
    <property type="entry name" value="NADH-UBIQUINONE OXIDOREDUCTASE CHAIN 6"/>
    <property type="match status" value="1"/>
</dbReference>
<dbReference type="PANTHER" id="PTHR33269:SF17">
    <property type="entry name" value="NADH-UBIQUINONE OXIDOREDUCTASE CHAIN 6"/>
    <property type="match status" value="1"/>
</dbReference>
<dbReference type="Pfam" id="PF00499">
    <property type="entry name" value="Oxidored_q3"/>
    <property type="match status" value="1"/>
</dbReference>
<organism>
    <name type="scientific">Candida parapsilosis</name>
    <name type="common">Yeast</name>
    <dbReference type="NCBI Taxonomy" id="5480"/>
    <lineage>
        <taxon>Eukaryota</taxon>
        <taxon>Fungi</taxon>
        <taxon>Dikarya</taxon>
        <taxon>Ascomycota</taxon>
        <taxon>Saccharomycotina</taxon>
        <taxon>Pichiomycetes</taxon>
        <taxon>Debaryomycetaceae</taxon>
        <taxon>Candida/Lodderomyces clade</taxon>
        <taxon>Candida</taxon>
    </lineage>
</organism>
<gene>
    <name type="primary">ND6</name>
    <name type="synonym">NAD6</name>
</gene>